<gene>
    <name evidence="1" type="primary">argH</name>
    <name type="ordered locus">VC_2641</name>
</gene>
<comment type="catalytic activity">
    <reaction evidence="1">
        <text>2-(N(omega)-L-arginino)succinate = fumarate + L-arginine</text>
        <dbReference type="Rhea" id="RHEA:24020"/>
        <dbReference type="ChEBI" id="CHEBI:29806"/>
        <dbReference type="ChEBI" id="CHEBI:32682"/>
        <dbReference type="ChEBI" id="CHEBI:57472"/>
        <dbReference type="EC" id="4.3.2.1"/>
    </reaction>
</comment>
<comment type="pathway">
    <text evidence="1">Amino-acid biosynthesis; L-arginine biosynthesis; L-arginine from L-ornithine and carbamoyl phosphate: step 3/3.</text>
</comment>
<comment type="subcellular location">
    <subcellularLocation>
        <location evidence="1">Cytoplasm</location>
    </subcellularLocation>
</comment>
<comment type="similarity">
    <text evidence="1">Belongs to the lyase 1 family. Argininosuccinate lyase subfamily.</text>
</comment>
<name>ARLY_VIBCH</name>
<proteinExistence type="inferred from homology"/>
<accession>Q9KNT9</accession>
<reference key="1">
    <citation type="journal article" date="2000" name="Nature">
        <title>DNA sequence of both chromosomes of the cholera pathogen Vibrio cholerae.</title>
        <authorList>
            <person name="Heidelberg J.F."/>
            <person name="Eisen J.A."/>
            <person name="Nelson W.C."/>
            <person name="Clayton R.A."/>
            <person name="Gwinn M.L."/>
            <person name="Dodson R.J."/>
            <person name="Haft D.H."/>
            <person name="Hickey E.K."/>
            <person name="Peterson J.D."/>
            <person name="Umayam L.A."/>
            <person name="Gill S.R."/>
            <person name="Nelson K.E."/>
            <person name="Read T.D."/>
            <person name="Tettelin H."/>
            <person name="Richardson D.L."/>
            <person name="Ermolaeva M.D."/>
            <person name="Vamathevan J.J."/>
            <person name="Bass S."/>
            <person name="Qin H."/>
            <person name="Dragoi I."/>
            <person name="Sellers P."/>
            <person name="McDonald L.A."/>
            <person name="Utterback T.R."/>
            <person name="Fleischmann R.D."/>
            <person name="Nierman W.C."/>
            <person name="White O."/>
            <person name="Salzberg S.L."/>
            <person name="Smith H.O."/>
            <person name="Colwell R.R."/>
            <person name="Mekalanos J.J."/>
            <person name="Venter J.C."/>
            <person name="Fraser C.M."/>
        </authorList>
    </citation>
    <scope>NUCLEOTIDE SEQUENCE [LARGE SCALE GENOMIC DNA]</scope>
    <source>
        <strain>ATCC 39315 / El Tor Inaba N16961</strain>
    </source>
</reference>
<sequence>MALWGGRFTQAADSRFKSFNDSLRFDYRLAEQDIVGSIAWSKALVSVNVLSVQEQQQLEQALNHLLQSVQQDPEQILASDAEDIHSWVEQKLIEQVGDLGKKLHTGRSRNDQVATDLKLWCRDQGVHLLLALKTLQQQLVAVAAEHQSTVLPGYTHLQRAQPVTFTHWCLAYLEMFERDESRLTDALARLNTSPLGSGALAGTAYAIDREVLAADLGFTRATRNSLDAVSDRDHVMELMSVASISMLHLSRLAEDMIFYTTGEAGFIELADTVTSGSSLMPQKKNPDALELIRGKTGRVYGALAGMMMTVKALPLAYNKDMQEDKEGLFDALDTWFDCLQMAGLCFDGIKVNAARTLEAAKQGYSNATELADYLVAKGIPFREAHHIVGVAVVAAIGKGVALEELCLAELQQFSPLIEQDVYPILTIESCLEKRCALGGVSPKQVAHALQQAQARVKS</sequence>
<dbReference type="EC" id="4.3.2.1" evidence="1"/>
<dbReference type="EMBL" id="AE003852">
    <property type="protein sequence ID" value="AAF95782.1"/>
    <property type="molecule type" value="Genomic_DNA"/>
</dbReference>
<dbReference type="PIR" id="H82051">
    <property type="entry name" value="H82051"/>
</dbReference>
<dbReference type="RefSeq" id="NP_232269.1">
    <property type="nucleotide sequence ID" value="NC_002505.1"/>
</dbReference>
<dbReference type="RefSeq" id="WP_001240133.1">
    <property type="nucleotide sequence ID" value="NZ_LT906614.1"/>
</dbReference>
<dbReference type="SMR" id="Q9KNT9"/>
<dbReference type="STRING" id="243277.VC_2641"/>
<dbReference type="DNASU" id="2615658"/>
<dbReference type="EnsemblBacteria" id="AAF95782">
    <property type="protein sequence ID" value="AAF95782"/>
    <property type="gene ID" value="VC_2641"/>
</dbReference>
<dbReference type="KEGG" id="vch:VC_2641"/>
<dbReference type="PATRIC" id="fig|243277.26.peg.2518"/>
<dbReference type="eggNOG" id="COG0165">
    <property type="taxonomic scope" value="Bacteria"/>
</dbReference>
<dbReference type="HOGENOM" id="CLU_027272_2_3_6"/>
<dbReference type="UniPathway" id="UPA00068">
    <property type="reaction ID" value="UER00114"/>
</dbReference>
<dbReference type="Proteomes" id="UP000000584">
    <property type="component" value="Chromosome 1"/>
</dbReference>
<dbReference type="GO" id="GO:0005829">
    <property type="term" value="C:cytosol"/>
    <property type="evidence" value="ECO:0000318"/>
    <property type="project" value="GO_Central"/>
</dbReference>
<dbReference type="GO" id="GO:0004056">
    <property type="term" value="F:argininosuccinate lyase activity"/>
    <property type="evidence" value="ECO:0000318"/>
    <property type="project" value="GO_Central"/>
</dbReference>
<dbReference type="GO" id="GO:0042450">
    <property type="term" value="P:arginine biosynthetic process via ornithine"/>
    <property type="evidence" value="ECO:0000318"/>
    <property type="project" value="GO_Central"/>
</dbReference>
<dbReference type="GO" id="GO:0006526">
    <property type="term" value="P:L-arginine biosynthetic process"/>
    <property type="evidence" value="ECO:0007669"/>
    <property type="project" value="UniProtKB-UniRule"/>
</dbReference>
<dbReference type="CDD" id="cd01359">
    <property type="entry name" value="Argininosuccinate_lyase"/>
    <property type="match status" value="1"/>
</dbReference>
<dbReference type="FunFam" id="1.10.40.30:FF:000001">
    <property type="entry name" value="Argininosuccinate lyase"/>
    <property type="match status" value="1"/>
</dbReference>
<dbReference type="FunFam" id="1.20.200.10:FF:000006">
    <property type="entry name" value="Argininosuccinate lyase"/>
    <property type="match status" value="1"/>
</dbReference>
<dbReference type="Gene3D" id="1.10.40.30">
    <property type="entry name" value="Fumarase/aspartase (C-terminal domain)"/>
    <property type="match status" value="1"/>
</dbReference>
<dbReference type="Gene3D" id="1.20.200.10">
    <property type="entry name" value="Fumarase/aspartase (Central domain)"/>
    <property type="match status" value="1"/>
</dbReference>
<dbReference type="Gene3D" id="1.10.275.10">
    <property type="entry name" value="Fumarase/aspartase (N-terminal domain)"/>
    <property type="match status" value="1"/>
</dbReference>
<dbReference type="HAMAP" id="MF_00006">
    <property type="entry name" value="Arg_succ_lyase"/>
    <property type="match status" value="1"/>
</dbReference>
<dbReference type="InterPro" id="IPR029419">
    <property type="entry name" value="Arg_succ_lyase_C"/>
</dbReference>
<dbReference type="InterPro" id="IPR009049">
    <property type="entry name" value="Argininosuccinate_lyase"/>
</dbReference>
<dbReference type="InterPro" id="IPR024083">
    <property type="entry name" value="Fumarase/histidase_N"/>
</dbReference>
<dbReference type="InterPro" id="IPR020557">
    <property type="entry name" value="Fumarate_lyase_CS"/>
</dbReference>
<dbReference type="InterPro" id="IPR000362">
    <property type="entry name" value="Fumarate_lyase_fam"/>
</dbReference>
<dbReference type="InterPro" id="IPR022761">
    <property type="entry name" value="Fumarate_lyase_N"/>
</dbReference>
<dbReference type="InterPro" id="IPR008948">
    <property type="entry name" value="L-Aspartase-like"/>
</dbReference>
<dbReference type="NCBIfam" id="TIGR00838">
    <property type="entry name" value="argH"/>
    <property type="match status" value="1"/>
</dbReference>
<dbReference type="NCBIfam" id="NF008964">
    <property type="entry name" value="PRK12308.1"/>
    <property type="match status" value="1"/>
</dbReference>
<dbReference type="PANTHER" id="PTHR43814">
    <property type="entry name" value="ARGININOSUCCINATE LYASE"/>
    <property type="match status" value="1"/>
</dbReference>
<dbReference type="PANTHER" id="PTHR43814:SF1">
    <property type="entry name" value="ARGININOSUCCINATE LYASE"/>
    <property type="match status" value="1"/>
</dbReference>
<dbReference type="Pfam" id="PF14698">
    <property type="entry name" value="ASL_C2"/>
    <property type="match status" value="1"/>
</dbReference>
<dbReference type="Pfam" id="PF00206">
    <property type="entry name" value="Lyase_1"/>
    <property type="match status" value="1"/>
</dbReference>
<dbReference type="PRINTS" id="PR00145">
    <property type="entry name" value="ARGSUCLYASE"/>
</dbReference>
<dbReference type="PRINTS" id="PR00149">
    <property type="entry name" value="FUMRATELYASE"/>
</dbReference>
<dbReference type="SUPFAM" id="SSF48557">
    <property type="entry name" value="L-aspartase-like"/>
    <property type="match status" value="1"/>
</dbReference>
<dbReference type="PROSITE" id="PS00163">
    <property type="entry name" value="FUMARATE_LYASES"/>
    <property type="match status" value="1"/>
</dbReference>
<evidence type="ECO:0000255" key="1">
    <source>
        <dbReference type="HAMAP-Rule" id="MF_00006"/>
    </source>
</evidence>
<protein>
    <recommendedName>
        <fullName evidence="1">Argininosuccinate lyase</fullName>
        <shortName evidence="1">ASAL</shortName>
        <ecNumber evidence="1">4.3.2.1</ecNumber>
    </recommendedName>
    <alternativeName>
        <fullName evidence="1">Arginosuccinase</fullName>
    </alternativeName>
</protein>
<organism>
    <name type="scientific">Vibrio cholerae serotype O1 (strain ATCC 39315 / El Tor Inaba N16961)</name>
    <dbReference type="NCBI Taxonomy" id="243277"/>
    <lineage>
        <taxon>Bacteria</taxon>
        <taxon>Pseudomonadati</taxon>
        <taxon>Pseudomonadota</taxon>
        <taxon>Gammaproteobacteria</taxon>
        <taxon>Vibrionales</taxon>
        <taxon>Vibrionaceae</taxon>
        <taxon>Vibrio</taxon>
    </lineage>
</organism>
<keyword id="KW-0028">Amino-acid biosynthesis</keyword>
<keyword id="KW-0055">Arginine biosynthesis</keyword>
<keyword id="KW-0963">Cytoplasm</keyword>
<keyword id="KW-0456">Lyase</keyword>
<keyword id="KW-1185">Reference proteome</keyword>
<feature type="chain" id="PRO_0000137845" description="Argininosuccinate lyase">
    <location>
        <begin position="1"/>
        <end position="458"/>
    </location>
</feature>